<gene>
    <name evidence="1" type="primary">alaS</name>
    <name type="ordered locus">lin1539</name>
</gene>
<reference key="1">
    <citation type="journal article" date="2001" name="Science">
        <title>Comparative genomics of Listeria species.</title>
        <authorList>
            <person name="Glaser P."/>
            <person name="Frangeul L."/>
            <person name="Buchrieser C."/>
            <person name="Rusniok C."/>
            <person name="Amend A."/>
            <person name="Baquero F."/>
            <person name="Berche P."/>
            <person name="Bloecker H."/>
            <person name="Brandt P."/>
            <person name="Chakraborty T."/>
            <person name="Charbit A."/>
            <person name="Chetouani F."/>
            <person name="Couve E."/>
            <person name="de Daruvar A."/>
            <person name="Dehoux P."/>
            <person name="Domann E."/>
            <person name="Dominguez-Bernal G."/>
            <person name="Duchaud E."/>
            <person name="Durant L."/>
            <person name="Dussurget O."/>
            <person name="Entian K.-D."/>
            <person name="Fsihi H."/>
            <person name="Garcia-del Portillo F."/>
            <person name="Garrido P."/>
            <person name="Gautier L."/>
            <person name="Goebel W."/>
            <person name="Gomez-Lopez N."/>
            <person name="Hain T."/>
            <person name="Hauf J."/>
            <person name="Jackson D."/>
            <person name="Jones L.-M."/>
            <person name="Kaerst U."/>
            <person name="Kreft J."/>
            <person name="Kuhn M."/>
            <person name="Kunst F."/>
            <person name="Kurapkat G."/>
            <person name="Madueno E."/>
            <person name="Maitournam A."/>
            <person name="Mata Vicente J."/>
            <person name="Ng E."/>
            <person name="Nedjari H."/>
            <person name="Nordsiek G."/>
            <person name="Novella S."/>
            <person name="de Pablos B."/>
            <person name="Perez-Diaz J.-C."/>
            <person name="Purcell R."/>
            <person name="Remmel B."/>
            <person name="Rose M."/>
            <person name="Schlueter T."/>
            <person name="Simoes N."/>
            <person name="Tierrez A."/>
            <person name="Vazquez-Boland J.-A."/>
            <person name="Voss H."/>
            <person name="Wehland J."/>
            <person name="Cossart P."/>
        </authorList>
    </citation>
    <scope>NUCLEOTIDE SEQUENCE [LARGE SCALE GENOMIC DNA]</scope>
    <source>
        <strain>ATCC BAA-680 / CLIP 11262</strain>
    </source>
</reference>
<accession>Q92BK9</accession>
<evidence type="ECO:0000255" key="1">
    <source>
        <dbReference type="HAMAP-Rule" id="MF_00036"/>
    </source>
</evidence>
<keyword id="KW-0030">Aminoacyl-tRNA synthetase</keyword>
<keyword id="KW-0067">ATP-binding</keyword>
<keyword id="KW-0963">Cytoplasm</keyword>
<keyword id="KW-0436">Ligase</keyword>
<keyword id="KW-0479">Metal-binding</keyword>
<keyword id="KW-0547">Nucleotide-binding</keyword>
<keyword id="KW-0648">Protein biosynthesis</keyword>
<keyword id="KW-0694">RNA-binding</keyword>
<keyword id="KW-0820">tRNA-binding</keyword>
<keyword id="KW-0862">Zinc</keyword>
<dbReference type="EC" id="6.1.1.7" evidence="1"/>
<dbReference type="EMBL" id="AL596168">
    <property type="protein sequence ID" value="CAC96770.1"/>
    <property type="molecule type" value="Genomic_DNA"/>
</dbReference>
<dbReference type="PIR" id="AB1625">
    <property type="entry name" value="AB1625"/>
</dbReference>
<dbReference type="RefSeq" id="WP_010991583.1">
    <property type="nucleotide sequence ID" value="NC_003212.1"/>
</dbReference>
<dbReference type="SMR" id="Q92BK9"/>
<dbReference type="STRING" id="272626.gene:17565870"/>
<dbReference type="GeneID" id="93234920"/>
<dbReference type="KEGG" id="lin:alaS"/>
<dbReference type="eggNOG" id="COG0013">
    <property type="taxonomic scope" value="Bacteria"/>
</dbReference>
<dbReference type="HOGENOM" id="CLU_004485_1_1_9"/>
<dbReference type="OrthoDB" id="9803884at2"/>
<dbReference type="Proteomes" id="UP000002513">
    <property type="component" value="Chromosome"/>
</dbReference>
<dbReference type="GO" id="GO:0005829">
    <property type="term" value="C:cytosol"/>
    <property type="evidence" value="ECO:0007669"/>
    <property type="project" value="TreeGrafter"/>
</dbReference>
<dbReference type="GO" id="GO:0004813">
    <property type="term" value="F:alanine-tRNA ligase activity"/>
    <property type="evidence" value="ECO:0007669"/>
    <property type="project" value="UniProtKB-UniRule"/>
</dbReference>
<dbReference type="GO" id="GO:0002161">
    <property type="term" value="F:aminoacyl-tRNA deacylase activity"/>
    <property type="evidence" value="ECO:0007669"/>
    <property type="project" value="TreeGrafter"/>
</dbReference>
<dbReference type="GO" id="GO:0005524">
    <property type="term" value="F:ATP binding"/>
    <property type="evidence" value="ECO:0007669"/>
    <property type="project" value="UniProtKB-UniRule"/>
</dbReference>
<dbReference type="GO" id="GO:0140096">
    <property type="term" value="F:catalytic activity, acting on a protein"/>
    <property type="evidence" value="ECO:0007669"/>
    <property type="project" value="UniProtKB-ARBA"/>
</dbReference>
<dbReference type="GO" id="GO:0016740">
    <property type="term" value="F:transferase activity"/>
    <property type="evidence" value="ECO:0007669"/>
    <property type="project" value="UniProtKB-ARBA"/>
</dbReference>
<dbReference type="GO" id="GO:0000049">
    <property type="term" value="F:tRNA binding"/>
    <property type="evidence" value="ECO:0007669"/>
    <property type="project" value="UniProtKB-KW"/>
</dbReference>
<dbReference type="GO" id="GO:0008270">
    <property type="term" value="F:zinc ion binding"/>
    <property type="evidence" value="ECO:0007669"/>
    <property type="project" value="UniProtKB-UniRule"/>
</dbReference>
<dbReference type="GO" id="GO:0006419">
    <property type="term" value="P:alanyl-tRNA aminoacylation"/>
    <property type="evidence" value="ECO:0007669"/>
    <property type="project" value="UniProtKB-UniRule"/>
</dbReference>
<dbReference type="CDD" id="cd00673">
    <property type="entry name" value="AlaRS_core"/>
    <property type="match status" value="1"/>
</dbReference>
<dbReference type="FunFam" id="2.40.30.130:FF:000011">
    <property type="entry name" value="Alanine--tRNA ligase"/>
    <property type="match status" value="1"/>
</dbReference>
<dbReference type="FunFam" id="3.10.310.40:FF:000001">
    <property type="entry name" value="Alanine--tRNA ligase"/>
    <property type="match status" value="1"/>
</dbReference>
<dbReference type="FunFam" id="3.30.54.20:FF:000001">
    <property type="entry name" value="Alanine--tRNA ligase"/>
    <property type="match status" value="1"/>
</dbReference>
<dbReference type="FunFam" id="3.30.930.10:FF:000046">
    <property type="entry name" value="Alanine--tRNA ligase"/>
    <property type="match status" value="1"/>
</dbReference>
<dbReference type="FunFam" id="3.30.980.10:FF:000004">
    <property type="entry name" value="Alanine--tRNA ligase, cytoplasmic"/>
    <property type="match status" value="1"/>
</dbReference>
<dbReference type="Gene3D" id="2.40.30.130">
    <property type="match status" value="1"/>
</dbReference>
<dbReference type="Gene3D" id="3.10.310.40">
    <property type="match status" value="1"/>
</dbReference>
<dbReference type="Gene3D" id="3.30.54.20">
    <property type="match status" value="1"/>
</dbReference>
<dbReference type="Gene3D" id="6.10.250.550">
    <property type="match status" value="1"/>
</dbReference>
<dbReference type="Gene3D" id="3.30.930.10">
    <property type="entry name" value="Bira Bifunctional Protein, Domain 2"/>
    <property type="match status" value="1"/>
</dbReference>
<dbReference type="Gene3D" id="3.30.980.10">
    <property type="entry name" value="Threonyl-trna Synthetase, Chain A, domain 2"/>
    <property type="match status" value="1"/>
</dbReference>
<dbReference type="HAMAP" id="MF_00036_B">
    <property type="entry name" value="Ala_tRNA_synth_B"/>
    <property type="match status" value="1"/>
</dbReference>
<dbReference type="InterPro" id="IPR045864">
    <property type="entry name" value="aa-tRNA-synth_II/BPL/LPL"/>
</dbReference>
<dbReference type="InterPro" id="IPR002318">
    <property type="entry name" value="Ala-tRNA-lgiase_IIc"/>
</dbReference>
<dbReference type="InterPro" id="IPR018162">
    <property type="entry name" value="Ala-tRNA-ligase_IIc_anticod-bd"/>
</dbReference>
<dbReference type="InterPro" id="IPR018165">
    <property type="entry name" value="Ala-tRNA-synth_IIc_core"/>
</dbReference>
<dbReference type="InterPro" id="IPR018164">
    <property type="entry name" value="Ala-tRNA-synth_IIc_N"/>
</dbReference>
<dbReference type="InterPro" id="IPR050058">
    <property type="entry name" value="Ala-tRNA_ligase"/>
</dbReference>
<dbReference type="InterPro" id="IPR023033">
    <property type="entry name" value="Ala_tRNA_ligase_euk/bac"/>
</dbReference>
<dbReference type="InterPro" id="IPR003156">
    <property type="entry name" value="DHHA1_dom"/>
</dbReference>
<dbReference type="InterPro" id="IPR018163">
    <property type="entry name" value="Thr/Ala-tRNA-synth_IIc_edit"/>
</dbReference>
<dbReference type="InterPro" id="IPR009000">
    <property type="entry name" value="Transl_B-barrel_sf"/>
</dbReference>
<dbReference type="InterPro" id="IPR012947">
    <property type="entry name" value="tRNA_SAD"/>
</dbReference>
<dbReference type="NCBIfam" id="TIGR00344">
    <property type="entry name" value="alaS"/>
    <property type="match status" value="1"/>
</dbReference>
<dbReference type="PANTHER" id="PTHR11777:SF9">
    <property type="entry name" value="ALANINE--TRNA LIGASE, CYTOPLASMIC"/>
    <property type="match status" value="1"/>
</dbReference>
<dbReference type="PANTHER" id="PTHR11777">
    <property type="entry name" value="ALANYL-TRNA SYNTHETASE"/>
    <property type="match status" value="1"/>
</dbReference>
<dbReference type="Pfam" id="PF02272">
    <property type="entry name" value="DHHA1"/>
    <property type="match status" value="1"/>
</dbReference>
<dbReference type="Pfam" id="PF01411">
    <property type="entry name" value="tRNA-synt_2c"/>
    <property type="match status" value="1"/>
</dbReference>
<dbReference type="Pfam" id="PF07973">
    <property type="entry name" value="tRNA_SAD"/>
    <property type="match status" value="1"/>
</dbReference>
<dbReference type="PRINTS" id="PR00980">
    <property type="entry name" value="TRNASYNTHALA"/>
</dbReference>
<dbReference type="SMART" id="SM00863">
    <property type="entry name" value="tRNA_SAD"/>
    <property type="match status" value="1"/>
</dbReference>
<dbReference type="SUPFAM" id="SSF55681">
    <property type="entry name" value="Class II aaRS and biotin synthetases"/>
    <property type="match status" value="1"/>
</dbReference>
<dbReference type="SUPFAM" id="SSF101353">
    <property type="entry name" value="Putative anticodon-binding domain of alanyl-tRNA synthetase (AlaRS)"/>
    <property type="match status" value="1"/>
</dbReference>
<dbReference type="SUPFAM" id="SSF55186">
    <property type="entry name" value="ThrRS/AlaRS common domain"/>
    <property type="match status" value="1"/>
</dbReference>
<dbReference type="SUPFAM" id="SSF50447">
    <property type="entry name" value="Translation proteins"/>
    <property type="match status" value="1"/>
</dbReference>
<dbReference type="PROSITE" id="PS50860">
    <property type="entry name" value="AA_TRNA_LIGASE_II_ALA"/>
    <property type="match status" value="1"/>
</dbReference>
<feature type="chain" id="PRO_0000075138" description="Alanine--tRNA ligase">
    <location>
        <begin position="1"/>
        <end position="879"/>
    </location>
</feature>
<feature type="binding site" evidence="1">
    <location>
        <position position="566"/>
    </location>
    <ligand>
        <name>Zn(2+)</name>
        <dbReference type="ChEBI" id="CHEBI:29105"/>
    </ligand>
</feature>
<feature type="binding site" evidence="1">
    <location>
        <position position="570"/>
    </location>
    <ligand>
        <name>Zn(2+)</name>
        <dbReference type="ChEBI" id="CHEBI:29105"/>
    </ligand>
</feature>
<feature type="binding site" evidence="1">
    <location>
        <position position="668"/>
    </location>
    <ligand>
        <name>Zn(2+)</name>
        <dbReference type="ChEBI" id="CHEBI:29105"/>
    </ligand>
</feature>
<feature type="binding site" evidence="1">
    <location>
        <position position="672"/>
    </location>
    <ligand>
        <name>Zn(2+)</name>
        <dbReference type="ChEBI" id="CHEBI:29105"/>
    </ligand>
</feature>
<protein>
    <recommendedName>
        <fullName evidence="1">Alanine--tRNA ligase</fullName>
        <ecNumber evidence="1">6.1.1.7</ecNumber>
    </recommendedName>
    <alternativeName>
        <fullName evidence="1">Alanyl-tRNA synthetase</fullName>
        <shortName evidence="1">AlaRS</shortName>
    </alternativeName>
</protein>
<organism>
    <name type="scientific">Listeria innocua serovar 6a (strain ATCC BAA-680 / CLIP 11262)</name>
    <dbReference type="NCBI Taxonomy" id="272626"/>
    <lineage>
        <taxon>Bacteria</taxon>
        <taxon>Bacillati</taxon>
        <taxon>Bacillota</taxon>
        <taxon>Bacilli</taxon>
        <taxon>Bacillales</taxon>
        <taxon>Listeriaceae</taxon>
        <taxon>Listeria</taxon>
    </lineage>
</organism>
<proteinExistence type="inferred from homology"/>
<comment type="function">
    <text evidence="1">Catalyzes the attachment of alanine to tRNA(Ala) in a two-step reaction: alanine is first activated by ATP to form Ala-AMP and then transferred to the acceptor end of tRNA(Ala). Also edits incorrectly charged Ser-tRNA(Ala) and Gly-tRNA(Ala) via its editing domain.</text>
</comment>
<comment type="catalytic activity">
    <reaction evidence="1">
        <text>tRNA(Ala) + L-alanine + ATP = L-alanyl-tRNA(Ala) + AMP + diphosphate</text>
        <dbReference type="Rhea" id="RHEA:12540"/>
        <dbReference type="Rhea" id="RHEA-COMP:9657"/>
        <dbReference type="Rhea" id="RHEA-COMP:9923"/>
        <dbReference type="ChEBI" id="CHEBI:30616"/>
        <dbReference type="ChEBI" id="CHEBI:33019"/>
        <dbReference type="ChEBI" id="CHEBI:57972"/>
        <dbReference type="ChEBI" id="CHEBI:78442"/>
        <dbReference type="ChEBI" id="CHEBI:78497"/>
        <dbReference type="ChEBI" id="CHEBI:456215"/>
        <dbReference type="EC" id="6.1.1.7"/>
    </reaction>
</comment>
<comment type="cofactor">
    <cofactor evidence="1">
        <name>Zn(2+)</name>
        <dbReference type="ChEBI" id="CHEBI:29105"/>
    </cofactor>
    <text evidence="1">Binds 1 zinc ion per subunit.</text>
</comment>
<comment type="subcellular location">
    <subcellularLocation>
        <location evidence="1">Cytoplasm</location>
    </subcellularLocation>
</comment>
<comment type="domain">
    <text evidence="1">Consists of three domains; the N-terminal catalytic domain, the editing domain and the C-terminal C-Ala domain. The editing domain removes incorrectly charged amino acids, while the C-Ala domain, along with tRNA(Ala), serves as a bridge to cooperatively bring together the editing and aminoacylation centers thus stimulating deacylation of misacylated tRNAs.</text>
</comment>
<comment type="similarity">
    <text evidence="1">Belongs to the class-II aminoacyl-tRNA synthetase family.</text>
</comment>
<name>SYA_LISIN</name>
<sequence>MKQLSSAEVRQLFLDFFKEKGHTIEPSAPLVPNNDPTILWINSGVATMKKYFDGSVIPDNPRMANAQKSIRTNDIENVGKTARHHTFFEMLGNFSIGDYFKEGAILFAWEFLTSPKWIGFDPDKLYVTVYPEDEEAKTLWREKIGLSEDHIVEIEDNFWDIGIGPSGPDSEIFYDRGPAFGDDESDPELYPGGENERYLEIWNLVFSQFNHNPDGTYTPLPKQNIDTGMGLERMVSIIQDAPTNFETDLFMPIIREVEQISGVKYGHSQENDVAFKVIADHIRTVAFAIGDGALPSNEGRGYILRRLLRRAVRYAKVLTINEPFMYKLVPVVGKIMNSFYPEVENQTDFIQKVIRTEEERFHETLNEGLAILETILKNAKETNEQTIKGADIFKLYDTFGFPVELTEEYAEDHGLKVDHAGFEAEMKEQRDRARSARADVKSMQVQGELLANLTDKSEFVGYNTTEHVSEILYLIQDDTLVDEVASGSEAQVIFKETPFYAESGGQVADKGTIESETGVAYVEDVQKAPNKQNLHRISVKEGVLKTGDTVKLAVDKVKRRETIKNHTATHLLHRALKDTLGEHVNQAGSLVSPDRLRFDFSHFGQITEEELTKMEEIVNEKIWEQINVIIEEMPIAEAKELGAMALFGEKYGEVVRVVQVGKYSIELCGGVHVRNTADIGLFKIVSETGIGAGTRRIEAVTGKEAYRFVTEQENTLKQTANLLKTTTKETPQKVEQLQADLREVRRENESLLSKLASAASADIFESPEEIGGVKVIAKQVNAKDMNQLRQFVDNWKDKKIGGVLVLGAVQGDKVNLISAVSEDAIKAGYHAGKLLKEVATRCGGNGGGRPDMAQAGGKNPAELGTALDYVSTWVKEQQA</sequence>